<comment type="function">
    <text evidence="1">Component of the acetyl coenzyme A carboxylase (ACC) complex. Biotin carboxylase (BC) catalyzes the carboxylation of biotin on its carrier protein (BCCP) and then the CO(2) group is transferred by the transcarboxylase to acetyl-CoA to form malonyl-CoA.</text>
</comment>
<comment type="catalytic activity">
    <reaction evidence="1">
        <text>N(6)-carboxybiotinyl-L-lysyl-[protein] + acetyl-CoA = N(6)-biotinyl-L-lysyl-[protein] + malonyl-CoA</text>
        <dbReference type="Rhea" id="RHEA:54728"/>
        <dbReference type="Rhea" id="RHEA-COMP:10505"/>
        <dbReference type="Rhea" id="RHEA-COMP:10506"/>
        <dbReference type="ChEBI" id="CHEBI:57288"/>
        <dbReference type="ChEBI" id="CHEBI:57384"/>
        <dbReference type="ChEBI" id="CHEBI:83144"/>
        <dbReference type="ChEBI" id="CHEBI:83145"/>
        <dbReference type="EC" id="2.1.3.15"/>
    </reaction>
</comment>
<comment type="cofactor">
    <cofactor evidence="1">
        <name>Zn(2+)</name>
        <dbReference type="ChEBI" id="CHEBI:29105"/>
    </cofactor>
    <text evidence="1">Binds 1 zinc ion per subunit.</text>
</comment>
<comment type="pathway">
    <text evidence="1">Lipid metabolism; malonyl-CoA biosynthesis; malonyl-CoA from acetyl-CoA: step 1/1.</text>
</comment>
<comment type="subunit">
    <text evidence="1">Acetyl-CoA carboxylase is a heterohexamer composed of biotin carboxyl carrier protein (AccB), biotin carboxylase (AccC) and two subunits each of ACCase subunit alpha (AccA) and ACCase subunit beta (AccD).</text>
</comment>
<comment type="subcellular location">
    <subcellularLocation>
        <location evidence="1">Cytoplasm</location>
    </subcellularLocation>
</comment>
<comment type="similarity">
    <text evidence="1">Belongs to the AccD/PCCB family.</text>
</comment>
<accession>C6XT67</accession>
<feature type="chain" id="PRO_0000389812" description="Acetyl-coenzyme A carboxylase carboxyl transferase subunit beta">
    <location>
        <begin position="1"/>
        <end position="281"/>
    </location>
</feature>
<feature type="domain" description="CoA carboxyltransferase N-terminal" evidence="2">
    <location>
        <begin position="25"/>
        <end position="281"/>
    </location>
</feature>
<feature type="zinc finger region" description="C4-type" evidence="1">
    <location>
        <begin position="29"/>
        <end position="51"/>
    </location>
</feature>
<feature type="region of interest" description="Disordered" evidence="3">
    <location>
        <begin position="1"/>
        <end position="23"/>
    </location>
</feature>
<feature type="binding site" evidence="1">
    <location>
        <position position="29"/>
    </location>
    <ligand>
        <name>Zn(2+)</name>
        <dbReference type="ChEBI" id="CHEBI:29105"/>
    </ligand>
</feature>
<feature type="binding site" evidence="1">
    <location>
        <position position="32"/>
    </location>
    <ligand>
        <name>Zn(2+)</name>
        <dbReference type="ChEBI" id="CHEBI:29105"/>
    </ligand>
</feature>
<feature type="binding site" evidence="1">
    <location>
        <position position="48"/>
    </location>
    <ligand>
        <name>Zn(2+)</name>
        <dbReference type="ChEBI" id="CHEBI:29105"/>
    </ligand>
</feature>
<feature type="binding site" evidence="1">
    <location>
        <position position="51"/>
    </location>
    <ligand>
        <name>Zn(2+)</name>
        <dbReference type="ChEBI" id="CHEBI:29105"/>
    </ligand>
</feature>
<sequence>MAWFKREKKGISTSTEEKKEAPDGLWNKCPNCKKALHSADLLENKYVCQYCNYHLRVGSKEYFQVLFDNNQFTELFPNLTSGDPLNFTDSKPYTERLIESMAKTGLKDAIRAAHGKIEGEDLVVACMDFNFIGGSMGSVVGEKIARSIDYSIKHKIPFLMISKSGGARMMEAAFSLMQMAKTSAKLALLSQAKIPYISLLTDPTTGGVTASYAMLGDINIAEPGSLIGFAGPRVIKETIKKDLPKGFQTAEFVLEHGFLDFIVDRRAMKAKLAAFLKMMKN</sequence>
<gene>
    <name evidence="1" type="primary">accD</name>
    <name type="ordered locus">Phep_1414</name>
</gene>
<evidence type="ECO:0000255" key="1">
    <source>
        <dbReference type="HAMAP-Rule" id="MF_01395"/>
    </source>
</evidence>
<evidence type="ECO:0000255" key="2">
    <source>
        <dbReference type="PROSITE-ProRule" id="PRU01136"/>
    </source>
</evidence>
<evidence type="ECO:0000256" key="3">
    <source>
        <dbReference type="SAM" id="MobiDB-lite"/>
    </source>
</evidence>
<organism>
    <name type="scientific">Pedobacter heparinus (strain ATCC 13125 / DSM 2366 / CIP 104194 / JCM 7457 / NBRC 12017 / NCIMB 9290 / NRRL B-14731 / HIM 762-3)</name>
    <dbReference type="NCBI Taxonomy" id="485917"/>
    <lineage>
        <taxon>Bacteria</taxon>
        <taxon>Pseudomonadati</taxon>
        <taxon>Bacteroidota</taxon>
        <taxon>Sphingobacteriia</taxon>
        <taxon>Sphingobacteriales</taxon>
        <taxon>Sphingobacteriaceae</taxon>
        <taxon>Pedobacter</taxon>
    </lineage>
</organism>
<reference key="1">
    <citation type="journal article" date="2009" name="Stand. Genomic Sci.">
        <title>Complete genome sequence of Pedobacter heparinus type strain (HIM 762-3).</title>
        <authorList>
            <person name="Han C."/>
            <person name="Spring S."/>
            <person name="Lapidus A."/>
            <person name="Del Rio T.G."/>
            <person name="Tice H."/>
            <person name="Copeland A."/>
            <person name="Cheng J.F."/>
            <person name="Lucas S."/>
            <person name="Chen F."/>
            <person name="Nolan M."/>
            <person name="Bruce D."/>
            <person name="Goodwin L."/>
            <person name="Pitluck S."/>
            <person name="Ivanova N."/>
            <person name="Mavromatis K."/>
            <person name="Mikhailova N."/>
            <person name="Pati A."/>
            <person name="Chen A."/>
            <person name="Palaniappan K."/>
            <person name="Land M."/>
            <person name="Hauser L."/>
            <person name="Chang Y.J."/>
            <person name="Jeffries C.C."/>
            <person name="Saunders E."/>
            <person name="Chertkov O."/>
            <person name="Brettin T."/>
            <person name="Goker M."/>
            <person name="Rohde M."/>
            <person name="Bristow J."/>
            <person name="Eisen J.A."/>
            <person name="Markowitz V."/>
            <person name="Hugenholtz P."/>
            <person name="Kyrpides N.C."/>
            <person name="Klenk H.P."/>
            <person name="Detter J.C."/>
        </authorList>
    </citation>
    <scope>NUCLEOTIDE SEQUENCE [LARGE SCALE GENOMIC DNA]</scope>
    <source>
        <strain>ATCC 13125 / DSM 2366 / CIP 104194 / JCM 7457 / NBRC 12017 / NCIMB 9290 / NRRL B-14731 / HIM 762-3</strain>
    </source>
</reference>
<keyword id="KW-0067">ATP-binding</keyword>
<keyword id="KW-0963">Cytoplasm</keyword>
<keyword id="KW-0275">Fatty acid biosynthesis</keyword>
<keyword id="KW-0276">Fatty acid metabolism</keyword>
<keyword id="KW-0444">Lipid biosynthesis</keyword>
<keyword id="KW-0443">Lipid metabolism</keyword>
<keyword id="KW-0479">Metal-binding</keyword>
<keyword id="KW-0547">Nucleotide-binding</keyword>
<keyword id="KW-1185">Reference proteome</keyword>
<keyword id="KW-0808">Transferase</keyword>
<keyword id="KW-0862">Zinc</keyword>
<keyword id="KW-0863">Zinc-finger</keyword>
<protein>
    <recommendedName>
        <fullName evidence="1">Acetyl-coenzyme A carboxylase carboxyl transferase subunit beta</fullName>
        <shortName evidence="1">ACCase subunit beta</shortName>
        <shortName evidence="1">Acetyl-CoA carboxylase carboxyltransferase subunit beta</shortName>
        <ecNumber evidence="1">2.1.3.15</ecNumber>
    </recommendedName>
</protein>
<dbReference type="EC" id="2.1.3.15" evidence="1"/>
<dbReference type="EMBL" id="CP001681">
    <property type="protein sequence ID" value="ACU03628.1"/>
    <property type="molecule type" value="Genomic_DNA"/>
</dbReference>
<dbReference type="RefSeq" id="WP_012781572.1">
    <property type="nucleotide sequence ID" value="NC_013061.1"/>
</dbReference>
<dbReference type="SMR" id="C6XT67"/>
<dbReference type="STRING" id="485917.Phep_1414"/>
<dbReference type="KEGG" id="phe:Phep_1414"/>
<dbReference type="eggNOG" id="COG0777">
    <property type="taxonomic scope" value="Bacteria"/>
</dbReference>
<dbReference type="HOGENOM" id="CLU_015486_1_0_10"/>
<dbReference type="OrthoDB" id="9772975at2"/>
<dbReference type="UniPathway" id="UPA00655">
    <property type="reaction ID" value="UER00711"/>
</dbReference>
<dbReference type="Proteomes" id="UP000000852">
    <property type="component" value="Chromosome"/>
</dbReference>
<dbReference type="GO" id="GO:0009317">
    <property type="term" value="C:acetyl-CoA carboxylase complex"/>
    <property type="evidence" value="ECO:0007669"/>
    <property type="project" value="InterPro"/>
</dbReference>
<dbReference type="GO" id="GO:0003989">
    <property type="term" value="F:acetyl-CoA carboxylase activity"/>
    <property type="evidence" value="ECO:0007669"/>
    <property type="project" value="InterPro"/>
</dbReference>
<dbReference type="GO" id="GO:0005524">
    <property type="term" value="F:ATP binding"/>
    <property type="evidence" value="ECO:0007669"/>
    <property type="project" value="UniProtKB-KW"/>
</dbReference>
<dbReference type="GO" id="GO:0016743">
    <property type="term" value="F:carboxyl- or carbamoyltransferase activity"/>
    <property type="evidence" value="ECO:0007669"/>
    <property type="project" value="UniProtKB-UniRule"/>
</dbReference>
<dbReference type="GO" id="GO:0008270">
    <property type="term" value="F:zinc ion binding"/>
    <property type="evidence" value="ECO:0007669"/>
    <property type="project" value="UniProtKB-UniRule"/>
</dbReference>
<dbReference type="GO" id="GO:0006633">
    <property type="term" value="P:fatty acid biosynthetic process"/>
    <property type="evidence" value="ECO:0007669"/>
    <property type="project" value="UniProtKB-KW"/>
</dbReference>
<dbReference type="GO" id="GO:2001295">
    <property type="term" value="P:malonyl-CoA biosynthetic process"/>
    <property type="evidence" value="ECO:0007669"/>
    <property type="project" value="UniProtKB-UniRule"/>
</dbReference>
<dbReference type="Gene3D" id="3.90.226.10">
    <property type="entry name" value="2-enoyl-CoA Hydratase, Chain A, domain 1"/>
    <property type="match status" value="1"/>
</dbReference>
<dbReference type="HAMAP" id="MF_01395">
    <property type="entry name" value="AcetylCoA_CT_beta"/>
    <property type="match status" value="1"/>
</dbReference>
<dbReference type="InterPro" id="IPR034733">
    <property type="entry name" value="AcCoA_carboxyl_beta"/>
</dbReference>
<dbReference type="InterPro" id="IPR000438">
    <property type="entry name" value="Acetyl_CoA_COase_Trfase_b_su"/>
</dbReference>
<dbReference type="InterPro" id="IPR029045">
    <property type="entry name" value="ClpP/crotonase-like_dom_sf"/>
</dbReference>
<dbReference type="InterPro" id="IPR011762">
    <property type="entry name" value="COA_CT_N"/>
</dbReference>
<dbReference type="InterPro" id="IPR041010">
    <property type="entry name" value="Znf-ACC"/>
</dbReference>
<dbReference type="NCBIfam" id="TIGR00515">
    <property type="entry name" value="accD"/>
    <property type="match status" value="1"/>
</dbReference>
<dbReference type="PANTHER" id="PTHR42995">
    <property type="entry name" value="ACETYL-COENZYME A CARBOXYLASE CARBOXYL TRANSFERASE SUBUNIT BETA, CHLOROPLASTIC"/>
    <property type="match status" value="1"/>
</dbReference>
<dbReference type="PANTHER" id="PTHR42995:SF5">
    <property type="entry name" value="ACETYL-COENZYME A CARBOXYLASE CARBOXYL TRANSFERASE SUBUNIT BETA, CHLOROPLASTIC"/>
    <property type="match status" value="1"/>
</dbReference>
<dbReference type="Pfam" id="PF01039">
    <property type="entry name" value="Carboxyl_trans"/>
    <property type="match status" value="1"/>
</dbReference>
<dbReference type="Pfam" id="PF17848">
    <property type="entry name" value="Zn_ribbon_ACC"/>
    <property type="match status" value="1"/>
</dbReference>
<dbReference type="PRINTS" id="PR01070">
    <property type="entry name" value="ACCCTRFRASEB"/>
</dbReference>
<dbReference type="SUPFAM" id="SSF52096">
    <property type="entry name" value="ClpP/crotonase"/>
    <property type="match status" value="1"/>
</dbReference>
<dbReference type="PROSITE" id="PS50980">
    <property type="entry name" value="COA_CT_NTER"/>
    <property type="match status" value="1"/>
</dbReference>
<proteinExistence type="inferred from homology"/>
<name>ACCD_PEDHD</name>